<organism>
    <name type="scientific">Enterobacter agglomerans</name>
    <name type="common">Erwinia herbicola</name>
    <name type="synonym">Pantoea agglomerans</name>
    <dbReference type="NCBI Taxonomy" id="549"/>
    <lineage>
        <taxon>Bacteria</taxon>
        <taxon>Pseudomonadati</taxon>
        <taxon>Pseudomonadota</taxon>
        <taxon>Gammaproteobacteria</taxon>
        <taxon>Enterobacterales</taxon>
        <taxon>Erwiniaceae</taxon>
        <taxon>Pantoea</taxon>
        <taxon>Pantoea agglomerans group</taxon>
    </lineage>
</organism>
<proteinExistence type="inferred from homology"/>
<dbReference type="EMBL" id="L03291">
    <property type="protein sequence ID" value="AAA91766.1"/>
    <property type="molecule type" value="Genomic_DNA"/>
</dbReference>
<dbReference type="PIR" id="S31481">
    <property type="entry name" value="S31481"/>
</dbReference>
<dbReference type="SMR" id="P33037"/>
<dbReference type="STRING" id="549.BEE12_02690"/>
<dbReference type="eggNOG" id="COG0468">
    <property type="taxonomic scope" value="Bacteria"/>
</dbReference>
<dbReference type="GO" id="GO:0005829">
    <property type="term" value="C:cytosol"/>
    <property type="evidence" value="ECO:0007669"/>
    <property type="project" value="TreeGrafter"/>
</dbReference>
<dbReference type="GO" id="GO:0005524">
    <property type="term" value="F:ATP binding"/>
    <property type="evidence" value="ECO:0007669"/>
    <property type="project" value="UniProtKB-UniRule"/>
</dbReference>
<dbReference type="GO" id="GO:0016887">
    <property type="term" value="F:ATP hydrolysis activity"/>
    <property type="evidence" value="ECO:0007669"/>
    <property type="project" value="InterPro"/>
</dbReference>
<dbReference type="GO" id="GO:0140664">
    <property type="term" value="F:ATP-dependent DNA damage sensor activity"/>
    <property type="evidence" value="ECO:0007669"/>
    <property type="project" value="InterPro"/>
</dbReference>
<dbReference type="GO" id="GO:0003684">
    <property type="term" value="F:damaged DNA binding"/>
    <property type="evidence" value="ECO:0007669"/>
    <property type="project" value="UniProtKB-UniRule"/>
</dbReference>
<dbReference type="GO" id="GO:0003697">
    <property type="term" value="F:single-stranded DNA binding"/>
    <property type="evidence" value="ECO:0007669"/>
    <property type="project" value="UniProtKB-UniRule"/>
</dbReference>
<dbReference type="GO" id="GO:0006310">
    <property type="term" value="P:DNA recombination"/>
    <property type="evidence" value="ECO:0007669"/>
    <property type="project" value="UniProtKB-UniRule"/>
</dbReference>
<dbReference type="GO" id="GO:0006281">
    <property type="term" value="P:DNA repair"/>
    <property type="evidence" value="ECO:0007669"/>
    <property type="project" value="UniProtKB-UniRule"/>
</dbReference>
<dbReference type="GO" id="GO:0009432">
    <property type="term" value="P:SOS response"/>
    <property type="evidence" value="ECO:0007669"/>
    <property type="project" value="UniProtKB-UniRule"/>
</dbReference>
<dbReference type="CDD" id="cd00983">
    <property type="entry name" value="RecA"/>
    <property type="match status" value="1"/>
</dbReference>
<dbReference type="FunFam" id="3.40.50.300:FF:000087">
    <property type="entry name" value="Recombinase RecA"/>
    <property type="match status" value="1"/>
</dbReference>
<dbReference type="Gene3D" id="3.40.50.300">
    <property type="entry name" value="P-loop containing nucleotide triphosphate hydrolases"/>
    <property type="match status" value="1"/>
</dbReference>
<dbReference type="HAMAP" id="MF_00268">
    <property type="entry name" value="RecA"/>
    <property type="match status" value="1"/>
</dbReference>
<dbReference type="InterPro" id="IPR003593">
    <property type="entry name" value="AAA+_ATPase"/>
</dbReference>
<dbReference type="InterPro" id="IPR013765">
    <property type="entry name" value="DNA_recomb/repair_RecA"/>
</dbReference>
<dbReference type="InterPro" id="IPR020584">
    <property type="entry name" value="DNA_recomb/repair_RecA_CS"/>
</dbReference>
<dbReference type="InterPro" id="IPR027417">
    <property type="entry name" value="P-loop_NTPase"/>
</dbReference>
<dbReference type="InterPro" id="IPR049261">
    <property type="entry name" value="RecA-like_C"/>
</dbReference>
<dbReference type="InterPro" id="IPR049428">
    <property type="entry name" value="RecA-like_N"/>
</dbReference>
<dbReference type="InterPro" id="IPR020588">
    <property type="entry name" value="RecA_ATP-bd"/>
</dbReference>
<dbReference type="InterPro" id="IPR023400">
    <property type="entry name" value="RecA_C_sf"/>
</dbReference>
<dbReference type="InterPro" id="IPR020587">
    <property type="entry name" value="RecA_monomer-monomer_interface"/>
</dbReference>
<dbReference type="NCBIfam" id="TIGR02012">
    <property type="entry name" value="tigrfam_recA"/>
    <property type="match status" value="1"/>
</dbReference>
<dbReference type="PANTHER" id="PTHR45900:SF1">
    <property type="entry name" value="MITOCHONDRIAL DNA REPAIR PROTEIN RECA HOMOLOG-RELATED"/>
    <property type="match status" value="1"/>
</dbReference>
<dbReference type="PANTHER" id="PTHR45900">
    <property type="entry name" value="RECA"/>
    <property type="match status" value="1"/>
</dbReference>
<dbReference type="Pfam" id="PF00154">
    <property type="entry name" value="RecA"/>
    <property type="match status" value="1"/>
</dbReference>
<dbReference type="Pfam" id="PF21096">
    <property type="entry name" value="RecA_C"/>
    <property type="match status" value="1"/>
</dbReference>
<dbReference type="PRINTS" id="PR00142">
    <property type="entry name" value="RECA"/>
</dbReference>
<dbReference type="SMART" id="SM00382">
    <property type="entry name" value="AAA"/>
    <property type="match status" value="1"/>
</dbReference>
<dbReference type="SUPFAM" id="SSF52540">
    <property type="entry name" value="P-loop containing nucleoside triphosphate hydrolases"/>
    <property type="match status" value="1"/>
</dbReference>
<dbReference type="SUPFAM" id="SSF54752">
    <property type="entry name" value="RecA protein, C-terminal domain"/>
    <property type="match status" value="1"/>
</dbReference>
<dbReference type="PROSITE" id="PS00321">
    <property type="entry name" value="RECA_1"/>
    <property type="match status" value="1"/>
</dbReference>
<dbReference type="PROSITE" id="PS50162">
    <property type="entry name" value="RECA_2"/>
    <property type="match status" value="1"/>
</dbReference>
<dbReference type="PROSITE" id="PS50163">
    <property type="entry name" value="RECA_3"/>
    <property type="match status" value="1"/>
</dbReference>
<accession>P33037</accession>
<protein>
    <recommendedName>
        <fullName evidence="2">Protein RecA</fullName>
    </recommendedName>
    <alternativeName>
        <fullName evidence="2">Recombinase A</fullName>
    </alternativeName>
</protein>
<comment type="function">
    <text evidence="2">Can catalyze the hydrolysis of ATP in the presence of single-stranded DNA, the ATP-dependent uptake of single-stranded DNA by duplex DNA, and the ATP-dependent hybridization of homologous single-stranded DNAs. It interacts with LexA causing its activation and leading to its autocatalytic cleavage.</text>
</comment>
<comment type="subcellular location">
    <subcellularLocation>
        <location evidence="2">Cytoplasm</location>
    </subcellularLocation>
</comment>
<comment type="similarity">
    <text evidence="2">Belongs to the RecA family.</text>
</comment>
<sequence length="354" mass="37898">MAIDENKQKALAAALGQIEKQFGKGSIMRLGEDRSMDVETISTGSLSLDIALGAGGLPMGRIVEIYGPESSGKTTLTLQVIAAAQREGKTCAFIDAEHALDPIYAKKLGVDIDNLLCSQPDTGEQALEICDALTRSGAVDVIIVDSVAALTPKAEIEGEIGDSHMGLAARMMSQAMRKLAGNLKNANTLLIFINQIRMKIGVMFGNPETTTGGNALKFYASVRLDIRRIGAIKEGDVVVGSETRVKVVKNKIAAPFKQAEFQILYGEGININGELIDLGVKHKLIEKAGAWYSYNGEKIGQGKANSCNYLKENPKVAAELDKKLRDMLLSGTGELSVATTAEDADDNMETSEEF</sequence>
<name>RECA_ENTAG</name>
<keyword id="KW-0067">ATP-binding</keyword>
<keyword id="KW-0963">Cytoplasm</keyword>
<keyword id="KW-0227">DNA damage</keyword>
<keyword id="KW-0233">DNA recombination</keyword>
<keyword id="KW-0234">DNA repair</keyword>
<keyword id="KW-0238">DNA-binding</keyword>
<keyword id="KW-0547">Nucleotide-binding</keyword>
<keyword id="KW-0742">SOS response</keyword>
<reference key="1">
    <citation type="submission" date="1993-01" db="EMBL/GenBank/DDBJ databases">
        <authorList>
            <person name="Rappold C.S.J."/>
            <person name="Klingmueller W."/>
        </authorList>
    </citation>
    <scope>NUCLEOTIDE SEQUENCE [GENOMIC DNA]</scope>
</reference>
<evidence type="ECO:0000250" key="1"/>
<evidence type="ECO:0000255" key="2">
    <source>
        <dbReference type="HAMAP-Rule" id="MF_00268"/>
    </source>
</evidence>
<gene>
    <name evidence="2" type="primary">recA</name>
</gene>
<feature type="initiator methionine" description="Removed" evidence="1">
    <location>
        <position position="1"/>
    </location>
</feature>
<feature type="chain" id="PRO_0000122708" description="Protein RecA">
    <location>
        <begin position="2"/>
        <end position="354"/>
    </location>
</feature>
<feature type="binding site" evidence="2">
    <location>
        <begin position="67"/>
        <end position="74"/>
    </location>
    <ligand>
        <name>ATP</name>
        <dbReference type="ChEBI" id="CHEBI:30616"/>
    </ligand>
</feature>